<proteinExistence type="inferred from homology"/>
<keyword id="KW-0963">Cytoplasm</keyword>
<keyword id="KW-0227">DNA damage</keyword>
<keyword id="KW-0228">DNA excision</keyword>
<keyword id="KW-0234">DNA repair</keyword>
<keyword id="KW-0267">Excision nuclease</keyword>
<keyword id="KW-0742">SOS response</keyword>
<organism>
    <name type="scientific">Prosthecochloris aestuarii (strain DSM 271 / SK 413)</name>
    <dbReference type="NCBI Taxonomy" id="290512"/>
    <lineage>
        <taxon>Bacteria</taxon>
        <taxon>Pseudomonadati</taxon>
        <taxon>Chlorobiota</taxon>
        <taxon>Chlorobiia</taxon>
        <taxon>Chlorobiales</taxon>
        <taxon>Chlorobiaceae</taxon>
        <taxon>Prosthecochloris</taxon>
    </lineage>
</organism>
<reference key="1">
    <citation type="submission" date="2008-06" db="EMBL/GenBank/DDBJ databases">
        <title>Complete sequence of chromosome of Prosthecochloris aestuarii DSM 271.</title>
        <authorList>
            <consortium name="US DOE Joint Genome Institute"/>
            <person name="Lucas S."/>
            <person name="Copeland A."/>
            <person name="Lapidus A."/>
            <person name="Glavina del Rio T."/>
            <person name="Dalin E."/>
            <person name="Tice H."/>
            <person name="Bruce D."/>
            <person name="Goodwin L."/>
            <person name="Pitluck S."/>
            <person name="Schmutz J."/>
            <person name="Larimer F."/>
            <person name="Land M."/>
            <person name="Hauser L."/>
            <person name="Kyrpides N."/>
            <person name="Anderson I."/>
            <person name="Liu Z."/>
            <person name="Li T."/>
            <person name="Zhao F."/>
            <person name="Overmann J."/>
            <person name="Bryant D.A."/>
            <person name="Richardson P."/>
        </authorList>
    </citation>
    <scope>NUCLEOTIDE SEQUENCE [LARGE SCALE GENOMIC DNA]</scope>
    <source>
        <strain>DSM 271 / SK 413</strain>
    </source>
</reference>
<feature type="chain" id="PRO_1000099507" description="UvrABC system protein C">
    <location>
        <begin position="1"/>
        <end position="616"/>
    </location>
</feature>
<feature type="domain" description="GIY-YIG" evidence="1">
    <location>
        <begin position="21"/>
        <end position="100"/>
    </location>
</feature>
<feature type="domain" description="UVR" evidence="1">
    <location>
        <begin position="214"/>
        <end position="249"/>
    </location>
</feature>
<evidence type="ECO:0000255" key="1">
    <source>
        <dbReference type="HAMAP-Rule" id="MF_00203"/>
    </source>
</evidence>
<protein>
    <recommendedName>
        <fullName evidence="1">UvrABC system protein C</fullName>
        <shortName evidence="1">Protein UvrC</shortName>
    </recommendedName>
    <alternativeName>
        <fullName evidence="1">Excinuclease ABC subunit C</fullName>
    </alternativeName>
</protein>
<comment type="function">
    <text evidence="1">The UvrABC repair system catalyzes the recognition and processing of DNA lesions. UvrC both incises the 5' and 3' sides of the lesion. The N-terminal half is responsible for the 3' incision and the C-terminal half is responsible for the 5' incision.</text>
</comment>
<comment type="subunit">
    <text evidence="1">Interacts with UvrB in an incision complex.</text>
</comment>
<comment type="subcellular location">
    <subcellularLocation>
        <location evidence="1">Cytoplasm</location>
    </subcellularLocation>
</comment>
<comment type="similarity">
    <text evidence="1">Belongs to the UvrC family.</text>
</comment>
<sequence>MPDQPLNRTTIPEKKLSNLPTCPGVYQFKNNQGTIIYVGKAKNIRSRVRSYFREGPHISGKTKVLVNHIADIDIILTSSEVEALILENNLIKDLKPRYNINLKDDKTYPYLVITNEAFPRILITRQVKRDGSTYFGPYTEARQLRSVLDLISTIFPVRKCKLKLTKENIESGRFSVCLNYHIHTCKGPCEGKQREEDYLRMIEEIKGLLKGKTGALIRTLSAEMHRYADELRFEEAAELKIQIEGLRKYTERQKVVSKDPVDRDVFGIAQHQDDACGVIFKIREGKLLGSQRMYFSNVDDEQHETLLRKCLEKYYLETPDLIPQEIFLPLPIDDDEVMALRELTGDINLRFIVPKIGEKAKLVAMCIDNARHHLEEYLIEKQKRGELSRIVPALQALQETLHLSRQPERIECFDNSHFQGTDYTSSMVCFVGGKPRKSDYRKFKLNSFEGSDDYAAMQEAVTRRYSGSLQDELPLPDLIVIDGGKGQVNTAWKVLQELGLEIPVIGLAKRLEEIFLPNTPDPYNLAKTSPALKLLQQIRDEAHRFAITYHRKLRTKRTIQTGLTDIAGIGEKSAMKLLEHFGSIEQIAKAEKEEILAVTGPKTAEAILSYFRKKQP</sequence>
<accession>B4S9K0</accession>
<name>UVRC_PROA2</name>
<dbReference type="EMBL" id="CP001108">
    <property type="protein sequence ID" value="ACF46670.1"/>
    <property type="molecule type" value="Genomic_DNA"/>
</dbReference>
<dbReference type="RefSeq" id="WP_012506203.1">
    <property type="nucleotide sequence ID" value="NC_011059.1"/>
</dbReference>
<dbReference type="SMR" id="B4S9K0"/>
<dbReference type="STRING" id="290512.Paes_1652"/>
<dbReference type="KEGG" id="paa:Paes_1652"/>
<dbReference type="eggNOG" id="COG0322">
    <property type="taxonomic scope" value="Bacteria"/>
</dbReference>
<dbReference type="HOGENOM" id="CLU_014841_3_2_10"/>
<dbReference type="Proteomes" id="UP000002725">
    <property type="component" value="Chromosome"/>
</dbReference>
<dbReference type="GO" id="GO:0005737">
    <property type="term" value="C:cytoplasm"/>
    <property type="evidence" value="ECO:0007669"/>
    <property type="project" value="UniProtKB-SubCell"/>
</dbReference>
<dbReference type="GO" id="GO:0009380">
    <property type="term" value="C:excinuclease repair complex"/>
    <property type="evidence" value="ECO:0007669"/>
    <property type="project" value="InterPro"/>
</dbReference>
<dbReference type="GO" id="GO:0003677">
    <property type="term" value="F:DNA binding"/>
    <property type="evidence" value="ECO:0007669"/>
    <property type="project" value="UniProtKB-UniRule"/>
</dbReference>
<dbReference type="GO" id="GO:0009381">
    <property type="term" value="F:excinuclease ABC activity"/>
    <property type="evidence" value="ECO:0007669"/>
    <property type="project" value="UniProtKB-UniRule"/>
</dbReference>
<dbReference type="GO" id="GO:0006289">
    <property type="term" value="P:nucleotide-excision repair"/>
    <property type="evidence" value="ECO:0007669"/>
    <property type="project" value="UniProtKB-UniRule"/>
</dbReference>
<dbReference type="GO" id="GO:0009432">
    <property type="term" value="P:SOS response"/>
    <property type="evidence" value="ECO:0007669"/>
    <property type="project" value="UniProtKB-UniRule"/>
</dbReference>
<dbReference type="CDD" id="cd10434">
    <property type="entry name" value="GIY-YIG_UvrC_Cho"/>
    <property type="match status" value="1"/>
</dbReference>
<dbReference type="FunFam" id="3.30.420.340:FF:000004">
    <property type="entry name" value="UvrABC system protein C"/>
    <property type="match status" value="1"/>
</dbReference>
<dbReference type="FunFam" id="3.40.1440.10:FF:000001">
    <property type="entry name" value="UvrABC system protein C"/>
    <property type="match status" value="1"/>
</dbReference>
<dbReference type="Gene3D" id="1.10.150.20">
    <property type="entry name" value="5' to 3' exonuclease, C-terminal subdomain"/>
    <property type="match status" value="1"/>
</dbReference>
<dbReference type="Gene3D" id="3.40.1440.10">
    <property type="entry name" value="GIY-YIG endonuclease"/>
    <property type="match status" value="1"/>
</dbReference>
<dbReference type="Gene3D" id="4.10.860.10">
    <property type="entry name" value="UVR domain"/>
    <property type="match status" value="1"/>
</dbReference>
<dbReference type="Gene3D" id="3.30.420.340">
    <property type="entry name" value="UvrC, RNAse H endonuclease domain"/>
    <property type="match status" value="1"/>
</dbReference>
<dbReference type="HAMAP" id="MF_00203">
    <property type="entry name" value="UvrC"/>
    <property type="match status" value="1"/>
</dbReference>
<dbReference type="InterPro" id="IPR000305">
    <property type="entry name" value="GIY-YIG_endonuc"/>
</dbReference>
<dbReference type="InterPro" id="IPR035901">
    <property type="entry name" value="GIY-YIG_endonuc_sf"/>
</dbReference>
<dbReference type="InterPro" id="IPR047296">
    <property type="entry name" value="GIY-YIG_UvrC_Cho"/>
</dbReference>
<dbReference type="InterPro" id="IPR010994">
    <property type="entry name" value="RuvA_2-like"/>
</dbReference>
<dbReference type="InterPro" id="IPR001943">
    <property type="entry name" value="UVR_dom"/>
</dbReference>
<dbReference type="InterPro" id="IPR036876">
    <property type="entry name" value="UVR_dom_sf"/>
</dbReference>
<dbReference type="InterPro" id="IPR050066">
    <property type="entry name" value="UvrABC_protein_C"/>
</dbReference>
<dbReference type="InterPro" id="IPR004791">
    <property type="entry name" value="UvrC"/>
</dbReference>
<dbReference type="InterPro" id="IPR001162">
    <property type="entry name" value="UvrC_RNase_H_dom"/>
</dbReference>
<dbReference type="InterPro" id="IPR038476">
    <property type="entry name" value="UvrC_RNase_H_dom_sf"/>
</dbReference>
<dbReference type="NCBIfam" id="NF001824">
    <property type="entry name" value="PRK00558.1-5"/>
    <property type="match status" value="1"/>
</dbReference>
<dbReference type="NCBIfam" id="TIGR00194">
    <property type="entry name" value="uvrC"/>
    <property type="match status" value="1"/>
</dbReference>
<dbReference type="PANTHER" id="PTHR30562:SF1">
    <property type="entry name" value="UVRABC SYSTEM PROTEIN C"/>
    <property type="match status" value="1"/>
</dbReference>
<dbReference type="PANTHER" id="PTHR30562">
    <property type="entry name" value="UVRC/OXIDOREDUCTASE"/>
    <property type="match status" value="1"/>
</dbReference>
<dbReference type="Pfam" id="PF01541">
    <property type="entry name" value="GIY-YIG"/>
    <property type="match status" value="1"/>
</dbReference>
<dbReference type="Pfam" id="PF14520">
    <property type="entry name" value="HHH_5"/>
    <property type="match status" value="1"/>
</dbReference>
<dbReference type="Pfam" id="PF02151">
    <property type="entry name" value="UVR"/>
    <property type="match status" value="1"/>
</dbReference>
<dbReference type="Pfam" id="PF22920">
    <property type="entry name" value="UvrC_RNaseH"/>
    <property type="match status" value="1"/>
</dbReference>
<dbReference type="Pfam" id="PF08459">
    <property type="entry name" value="UvrC_RNaseH_dom"/>
    <property type="match status" value="1"/>
</dbReference>
<dbReference type="SMART" id="SM00465">
    <property type="entry name" value="GIYc"/>
    <property type="match status" value="1"/>
</dbReference>
<dbReference type="SUPFAM" id="SSF46600">
    <property type="entry name" value="C-terminal UvrC-binding domain of UvrB"/>
    <property type="match status" value="1"/>
</dbReference>
<dbReference type="SUPFAM" id="SSF82771">
    <property type="entry name" value="GIY-YIG endonuclease"/>
    <property type="match status" value="1"/>
</dbReference>
<dbReference type="SUPFAM" id="SSF47781">
    <property type="entry name" value="RuvA domain 2-like"/>
    <property type="match status" value="1"/>
</dbReference>
<dbReference type="PROSITE" id="PS50164">
    <property type="entry name" value="GIY_YIG"/>
    <property type="match status" value="1"/>
</dbReference>
<dbReference type="PROSITE" id="PS50151">
    <property type="entry name" value="UVR"/>
    <property type="match status" value="1"/>
</dbReference>
<dbReference type="PROSITE" id="PS50165">
    <property type="entry name" value="UVRC"/>
    <property type="match status" value="1"/>
</dbReference>
<gene>
    <name evidence="1" type="primary">uvrC</name>
    <name type="ordered locus">Paes_1652</name>
</gene>